<protein>
    <recommendedName>
        <fullName>Outer membrane lipoprotein Blc</fullName>
    </recommendedName>
</protein>
<proteinExistence type="inferred from homology"/>
<sequence>MRLLPLVAAATAAFLVVACSSPTPPRGVTVVNNFDAKRYLGTWYEIARFDHRFERGLEKVTATYSLRDDGGLNVINKGYNPDRGMWQQSEGKAYFTGAPTRAALKVSFFGPFYGGYNVIALDREYRHALVCGPDRDYLWILSRTPTISDEVKQEMLAVATREGFDVSKFIWVQQPGS</sequence>
<feature type="signal peptide" evidence="3">
    <location>
        <begin position="1"/>
        <end position="18"/>
    </location>
</feature>
<feature type="chain" id="PRO_0000017992" description="Outer membrane lipoprotein Blc">
    <location>
        <begin position="19"/>
        <end position="177"/>
    </location>
</feature>
<feature type="lipid moiety-binding region" description="N-palmitoyl cysteine" evidence="3">
    <location>
        <position position="19"/>
    </location>
</feature>
<feature type="lipid moiety-binding region" description="S-diacylglycerol cysteine" evidence="3">
    <location>
        <position position="19"/>
    </location>
</feature>
<keyword id="KW-0998">Cell outer membrane</keyword>
<keyword id="KW-0446">Lipid-binding</keyword>
<keyword id="KW-0449">Lipoprotein</keyword>
<keyword id="KW-0472">Membrane</keyword>
<keyword id="KW-0564">Palmitate</keyword>
<keyword id="KW-1185">Reference proteome</keyword>
<keyword id="KW-0732">Signal</keyword>
<name>BLC_ECO57</name>
<gene>
    <name type="primary">blc</name>
    <name type="ordered locus">Z5756</name>
    <name type="ordered locus">ECs5130</name>
</gene>
<reference key="1">
    <citation type="journal article" date="2001" name="Nature">
        <title>Genome sequence of enterohaemorrhagic Escherichia coli O157:H7.</title>
        <authorList>
            <person name="Perna N.T."/>
            <person name="Plunkett G. III"/>
            <person name="Burland V."/>
            <person name="Mau B."/>
            <person name="Glasner J.D."/>
            <person name="Rose D.J."/>
            <person name="Mayhew G.F."/>
            <person name="Evans P.S."/>
            <person name="Gregor J."/>
            <person name="Kirkpatrick H.A."/>
            <person name="Posfai G."/>
            <person name="Hackett J."/>
            <person name="Klink S."/>
            <person name="Boutin A."/>
            <person name="Shao Y."/>
            <person name="Miller L."/>
            <person name="Grotbeck E.J."/>
            <person name="Davis N.W."/>
            <person name="Lim A."/>
            <person name="Dimalanta E.T."/>
            <person name="Potamousis K."/>
            <person name="Apodaca J."/>
            <person name="Anantharaman T.S."/>
            <person name="Lin J."/>
            <person name="Yen G."/>
            <person name="Schwartz D.C."/>
            <person name="Welch R.A."/>
            <person name="Blattner F.R."/>
        </authorList>
    </citation>
    <scope>NUCLEOTIDE SEQUENCE [LARGE SCALE GENOMIC DNA]</scope>
    <source>
        <strain>O157:H7 / EDL933 / ATCC 700927 / EHEC</strain>
    </source>
</reference>
<reference key="2">
    <citation type="journal article" date="2001" name="DNA Res.">
        <title>Complete genome sequence of enterohemorrhagic Escherichia coli O157:H7 and genomic comparison with a laboratory strain K-12.</title>
        <authorList>
            <person name="Hayashi T."/>
            <person name="Makino K."/>
            <person name="Ohnishi M."/>
            <person name="Kurokawa K."/>
            <person name="Ishii K."/>
            <person name="Yokoyama K."/>
            <person name="Han C.-G."/>
            <person name="Ohtsubo E."/>
            <person name="Nakayama K."/>
            <person name="Murata T."/>
            <person name="Tanaka M."/>
            <person name="Tobe T."/>
            <person name="Iida T."/>
            <person name="Takami H."/>
            <person name="Honda T."/>
            <person name="Sasakawa C."/>
            <person name="Ogasawara N."/>
            <person name="Yasunaga T."/>
            <person name="Kuhara S."/>
            <person name="Shiba T."/>
            <person name="Hattori M."/>
            <person name="Shinagawa H."/>
        </authorList>
    </citation>
    <scope>NUCLEOTIDE SEQUENCE [LARGE SCALE GENOMIC DNA]</scope>
    <source>
        <strain>O157:H7 / Sakai / RIMD 0509952 / EHEC</strain>
    </source>
</reference>
<accession>P0A902</accession>
<accession>P39281</accession>
<dbReference type="EMBL" id="AE005174">
    <property type="protein sequence ID" value="AAG59350.1"/>
    <property type="molecule type" value="Genomic_DNA"/>
</dbReference>
<dbReference type="EMBL" id="BA000007">
    <property type="protein sequence ID" value="BAB38553.1"/>
    <property type="molecule type" value="Genomic_DNA"/>
</dbReference>
<dbReference type="PIR" id="B86111">
    <property type="entry name" value="B86111"/>
</dbReference>
<dbReference type="PIR" id="B91270">
    <property type="entry name" value="B91270"/>
</dbReference>
<dbReference type="RefSeq" id="NP_313157.1">
    <property type="nucleotide sequence ID" value="NC_002695.1"/>
</dbReference>
<dbReference type="RefSeq" id="WP_001238378.1">
    <property type="nucleotide sequence ID" value="NZ_VOAI01000008.1"/>
</dbReference>
<dbReference type="SMR" id="P0A902"/>
<dbReference type="STRING" id="155864.Z5756"/>
<dbReference type="GeneID" id="75169670"/>
<dbReference type="GeneID" id="913180"/>
<dbReference type="KEGG" id="ece:Z5756"/>
<dbReference type="KEGG" id="ecs:ECs_5130"/>
<dbReference type="PATRIC" id="fig|386585.9.peg.5363"/>
<dbReference type="eggNOG" id="COG3040">
    <property type="taxonomic scope" value="Bacteria"/>
</dbReference>
<dbReference type="HOGENOM" id="CLU_068449_3_0_6"/>
<dbReference type="OMA" id="HKYLGRW"/>
<dbReference type="Proteomes" id="UP000000558">
    <property type="component" value="Chromosome"/>
</dbReference>
<dbReference type="Proteomes" id="UP000002519">
    <property type="component" value="Chromosome"/>
</dbReference>
<dbReference type="GO" id="GO:0009279">
    <property type="term" value="C:cell outer membrane"/>
    <property type="evidence" value="ECO:0007669"/>
    <property type="project" value="UniProtKB-SubCell"/>
</dbReference>
<dbReference type="GO" id="GO:0008289">
    <property type="term" value="F:lipid binding"/>
    <property type="evidence" value="ECO:0007669"/>
    <property type="project" value="UniProtKB-KW"/>
</dbReference>
<dbReference type="GO" id="GO:0006950">
    <property type="term" value="P:response to stress"/>
    <property type="evidence" value="ECO:0007669"/>
    <property type="project" value="UniProtKB-ARBA"/>
</dbReference>
<dbReference type="CDD" id="cd19438">
    <property type="entry name" value="lipocalin_Blc-like"/>
    <property type="match status" value="1"/>
</dbReference>
<dbReference type="FunFam" id="2.40.128.20:FF:000002">
    <property type="entry name" value="Outer membrane lipoprotein Blc"/>
    <property type="match status" value="1"/>
</dbReference>
<dbReference type="Gene3D" id="2.40.128.20">
    <property type="match status" value="1"/>
</dbReference>
<dbReference type="InterPro" id="IPR012674">
    <property type="entry name" value="Calycin"/>
</dbReference>
<dbReference type="InterPro" id="IPR022271">
    <property type="entry name" value="Lipocalin_ApoD"/>
</dbReference>
<dbReference type="InterPro" id="IPR002446">
    <property type="entry name" value="Lipocalin_bac"/>
</dbReference>
<dbReference type="InterPro" id="IPR047202">
    <property type="entry name" value="Lipocalin_Blc-like_dom"/>
</dbReference>
<dbReference type="InterPro" id="IPR022272">
    <property type="entry name" value="Lipocalin_CS"/>
</dbReference>
<dbReference type="InterPro" id="IPR000566">
    <property type="entry name" value="Lipocln_cytosolic_FA-bd_dom"/>
</dbReference>
<dbReference type="NCBIfam" id="NF007786">
    <property type="entry name" value="PRK10477.1"/>
    <property type="match status" value="1"/>
</dbReference>
<dbReference type="PANTHER" id="PTHR10612">
    <property type="entry name" value="APOLIPOPROTEIN D"/>
    <property type="match status" value="1"/>
</dbReference>
<dbReference type="PANTHER" id="PTHR10612:SF34">
    <property type="entry name" value="APOLIPOPROTEIN D"/>
    <property type="match status" value="1"/>
</dbReference>
<dbReference type="Pfam" id="PF08212">
    <property type="entry name" value="Lipocalin_2"/>
    <property type="match status" value="1"/>
</dbReference>
<dbReference type="PIRSF" id="PIRSF036893">
    <property type="entry name" value="Lipocalin_ApoD"/>
    <property type="match status" value="1"/>
</dbReference>
<dbReference type="PRINTS" id="PR01171">
    <property type="entry name" value="BCTLIPOCALIN"/>
</dbReference>
<dbReference type="SUPFAM" id="SSF50814">
    <property type="entry name" value="Lipocalins"/>
    <property type="match status" value="1"/>
</dbReference>
<dbReference type="PROSITE" id="PS00213">
    <property type="entry name" value="LIPOCALIN"/>
    <property type="match status" value="1"/>
</dbReference>
<dbReference type="PROSITE" id="PS51257">
    <property type="entry name" value="PROKAR_LIPOPROTEIN"/>
    <property type="match status" value="1"/>
</dbReference>
<comment type="function">
    <text evidence="1">Involved in the storage or transport of lipids necessary for membrane maintenance under stressful conditions. Displays a binding preference for lysophospholipids (By similarity).</text>
</comment>
<comment type="subunit">
    <text evidence="1">Homodimer.</text>
</comment>
<comment type="subcellular location">
    <subcellularLocation>
        <location evidence="1">Cell outer membrane</location>
        <topology evidence="2">Lipid-anchor</topology>
    </subcellularLocation>
</comment>
<comment type="similarity">
    <text evidence="3">Belongs to the calycin superfamily. Lipocalin family.</text>
</comment>
<evidence type="ECO:0000250" key="1"/>
<evidence type="ECO:0000255" key="2">
    <source>
        <dbReference type="PROSITE-ProRule" id="PRU00303"/>
    </source>
</evidence>
<evidence type="ECO:0000305" key="3"/>
<organism>
    <name type="scientific">Escherichia coli O157:H7</name>
    <dbReference type="NCBI Taxonomy" id="83334"/>
    <lineage>
        <taxon>Bacteria</taxon>
        <taxon>Pseudomonadati</taxon>
        <taxon>Pseudomonadota</taxon>
        <taxon>Gammaproteobacteria</taxon>
        <taxon>Enterobacterales</taxon>
        <taxon>Enterobacteriaceae</taxon>
        <taxon>Escherichia</taxon>
    </lineage>
</organism>